<evidence type="ECO:0000250" key="1"/>
<evidence type="ECO:0000255" key="2"/>
<evidence type="ECO:0000255" key="3">
    <source>
        <dbReference type="PROSITE-ProRule" id="PRU00040"/>
    </source>
</evidence>
<evidence type="ECO:0000256" key="4">
    <source>
        <dbReference type="SAM" id="MobiDB-lite"/>
    </source>
</evidence>
<protein>
    <recommendedName>
        <fullName>C-type lectin domain family 2 member D5</fullName>
    </recommendedName>
    <alternativeName>
        <fullName>Osteoclast inhibitory lectin</fullName>
    </alternativeName>
</protein>
<accession>Q925N7</accession>
<reference key="1">
    <citation type="journal article" date="2001" name="J. Biol. Chem.">
        <title>A novel osteoblast-derived C-type lectin that inhibits osteoclast formation.</title>
        <authorList>
            <person name="Zhou H."/>
            <person name="Kartsogiannis V."/>
            <person name="Hu Y.S."/>
            <person name="Elliott J."/>
            <person name="Quinn J.M.W."/>
            <person name="McKinstry W.J."/>
            <person name="Gillespie M.T."/>
            <person name="Ng K.W."/>
        </authorList>
    </citation>
    <scope>NUCLEOTIDE SEQUENCE [MRNA]</scope>
    <source>
        <strain>Sprague-Dawley</strain>
    </source>
</reference>
<reference key="2">
    <citation type="journal article" date="2007" name="Immunity">
        <title>Cytomegalovirus evasion of innate immunity by subversion of the NKR-P1B:Ocil/Clr-b missing-self axis.</title>
        <authorList>
            <person name="Voigt S."/>
            <person name="Mesci A."/>
            <person name="Ettinger J."/>
            <person name="Fine J.H."/>
            <person name="Chen P."/>
            <person name="Chou W."/>
            <person name="Carlyle J.R."/>
        </authorList>
    </citation>
    <scope>NUCLEOTIDE SEQUENCE [MRNA]</scope>
    <source>
        <strain>Sprague-Dawley</strain>
    </source>
</reference>
<comment type="function">
    <text evidence="1">Lectin-type cell surface receptor.</text>
</comment>
<comment type="subcellular location">
    <subcellularLocation>
        <location evidence="1">Cell membrane</location>
        <topology evidence="1">Single-pass type II membrane protein</topology>
    </subcellularLocation>
</comment>
<proteinExistence type="evidence at transcript level"/>
<dbReference type="EMBL" id="AF321552">
    <property type="protein sequence ID" value="AAK50880.1"/>
    <property type="molecule type" value="mRNA"/>
</dbReference>
<dbReference type="EMBL" id="EF100688">
    <property type="protein sequence ID" value="ABO15828.1"/>
    <property type="molecule type" value="mRNA"/>
</dbReference>
<dbReference type="RefSeq" id="NP_569086.1">
    <property type="nucleotide sequence ID" value="NM_130402.2"/>
</dbReference>
<dbReference type="RefSeq" id="XP_008761531.1">
    <property type="nucleotide sequence ID" value="XM_008763309.2"/>
</dbReference>
<dbReference type="SMR" id="Q925N7"/>
<dbReference type="FunCoup" id="Q925N7">
    <property type="interactions" value="54"/>
</dbReference>
<dbReference type="STRING" id="10116.ENSRNOP00000010098"/>
<dbReference type="GlyCosmos" id="Q925N7">
    <property type="glycosylation" value="1 site, No reported glycans"/>
</dbReference>
<dbReference type="GlyGen" id="Q925N7">
    <property type="glycosylation" value="1 site"/>
</dbReference>
<dbReference type="PhosphoSitePlus" id="Q925N7"/>
<dbReference type="Ensembl" id="ENSRNOT00000090431.2">
    <property type="protein sequence ID" value="ENSRNOP00000071394.2"/>
    <property type="gene ID" value="ENSRNOG00000048726.3"/>
</dbReference>
<dbReference type="GeneID" id="113937"/>
<dbReference type="KEGG" id="rno:113937"/>
<dbReference type="UCSC" id="RGD:620070">
    <property type="organism name" value="rat"/>
</dbReference>
<dbReference type="AGR" id="RGD:620070"/>
<dbReference type="CTD" id="29121"/>
<dbReference type="RGD" id="620070">
    <property type="gene designation" value="Ocil"/>
</dbReference>
<dbReference type="GeneTree" id="ENSGT00940000155319"/>
<dbReference type="InParanoid" id="Q925N7"/>
<dbReference type="OMA" id="NSSHWIG"/>
<dbReference type="OrthoDB" id="8935730at2759"/>
<dbReference type="PhylomeDB" id="Q925N7"/>
<dbReference type="TreeFam" id="TF351467"/>
<dbReference type="PRO" id="PR:Q925N7"/>
<dbReference type="Proteomes" id="UP000002494">
    <property type="component" value="Chromosome 4"/>
</dbReference>
<dbReference type="GO" id="GO:0009986">
    <property type="term" value="C:cell surface"/>
    <property type="evidence" value="ECO:0000266"/>
    <property type="project" value="RGD"/>
</dbReference>
<dbReference type="GO" id="GO:0005783">
    <property type="term" value="C:endoplasmic reticulum"/>
    <property type="evidence" value="ECO:0000266"/>
    <property type="project" value="RGD"/>
</dbReference>
<dbReference type="GO" id="GO:0009897">
    <property type="term" value="C:external side of plasma membrane"/>
    <property type="evidence" value="ECO:0000266"/>
    <property type="project" value="RGD"/>
</dbReference>
<dbReference type="GO" id="GO:0030246">
    <property type="term" value="F:carbohydrate binding"/>
    <property type="evidence" value="ECO:0007669"/>
    <property type="project" value="UniProtKB-KW"/>
</dbReference>
<dbReference type="GO" id="GO:0046703">
    <property type="term" value="F:natural killer cell lectin-like receptor binding"/>
    <property type="evidence" value="ECO:0000266"/>
    <property type="project" value="RGD"/>
</dbReference>
<dbReference type="GO" id="GO:0045671">
    <property type="term" value="P:negative regulation of osteoclast differentiation"/>
    <property type="evidence" value="ECO:0000266"/>
    <property type="project" value="RGD"/>
</dbReference>
<dbReference type="GO" id="GO:0042270">
    <property type="term" value="P:protection from natural killer cell mediated cytotoxicity"/>
    <property type="evidence" value="ECO:0000266"/>
    <property type="project" value="RGD"/>
</dbReference>
<dbReference type="CDD" id="cd03593">
    <property type="entry name" value="CLECT_NK_receptors_like"/>
    <property type="match status" value="1"/>
</dbReference>
<dbReference type="Gene3D" id="3.10.100.10">
    <property type="entry name" value="Mannose-Binding Protein A, subunit A"/>
    <property type="match status" value="1"/>
</dbReference>
<dbReference type="InterPro" id="IPR001304">
    <property type="entry name" value="C-type_lectin-like"/>
</dbReference>
<dbReference type="InterPro" id="IPR016186">
    <property type="entry name" value="C-type_lectin-like/link_sf"/>
</dbReference>
<dbReference type="InterPro" id="IPR050828">
    <property type="entry name" value="C-type_lectin/matrix_domain"/>
</dbReference>
<dbReference type="InterPro" id="IPR016187">
    <property type="entry name" value="CTDL_fold"/>
</dbReference>
<dbReference type="InterPro" id="IPR033992">
    <property type="entry name" value="NKR-like_CTLD"/>
</dbReference>
<dbReference type="PANTHER" id="PTHR45710:SF19">
    <property type="entry name" value="C-TYPE LECTIN DOMAIN FAMILY 2 MEMBER D-RELATED"/>
    <property type="match status" value="1"/>
</dbReference>
<dbReference type="PANTHER" id="PTHR45710">
    <property type="entry name" value="C-TYPE LECTIN DOMAIN-CONTAINING PROTEIN 180"/>
    <property type="match status" value="1"/>
</dbReference>
<dbReference type="Pfam" id="PF00059">
    <property type="entry name" value="Lectin_C"/>
    <property type="match status" value="1"/>
</dbReference>
<dbReference type="SMART" id="SM00034">
    <property type="entry name" value="CLECT"/>
    <property type="match status" value="1"/>
</dbReference>
<dbReference type="SUPFAM" id="SSF56436">
    <property type="entry name" value="C-type lectin-like"/>
    <property type="match status" value="1"/>
</dbReference>
<dbReference type="PROSITE" id="PS50041">
    <property type="entry name" value="C_TYPE_LECTIN_2"/>
    <property type="match status" value="1"/>
</dbReference>
<organism>
    <name type="scientific">Rattus norvegicus</name>
    <name type="common">Rat</name>
    <dbReference type="NCBI Taxonomy" id="10116"/>
    <lineage>
        <taxon>Eukaryota</taxon>
        <taxon>Metazoa</taxon>
        <taxon>Chordata</taxon>
        <taxon>Craniata</taxon>
        <taxon>Vertebrata</taxon>
        <taxon>Euteleostomi</taxon>
        <taxon>Mammalia</taxon>
        <taxon>Eutheria</taxon>
        <taxon>Euarchontoglires</taxon>
        <taxon>Glires</taxon>
        <taxon>Rodentia</taxon>
        <taxon>Myomorpha</taxon>
        <taxon>Muroidea</taxon>
        <taxon>Muridae</taxon>
        <taxon>Murinae</taxon>
        <taxon>Rattus</taxon>
    </lineage>
</organism>
<name>CL2D5_RAT</name>
<keyword id="KW-1003">Cell membrane</keyword>
<keyword id="KW-0325">Glycoprotein</keyword>
<keyword id="KW-0430">Lectin</keyword>
<keyword id="KW-0472">Membrane</keyword>
<keyword id="KW-0675">Receptor</keyword>
<keyword id="KW-1185">Reference proteome</keyword>
<keyword id="KW-0735">Signal-anchor</keyword>
<keyword id="KW-0812">Transmembrane</keyword>
<keyword id="KW-1133">Transmembrane helix</keyword>
<sequence length="233" mass="25686">MPSSAHLQDPPPLLSRTLTQNEGQTSLRQSSSCGPSAASASESLSGSTESRIPHSKMLQGKLPRNIPLEYPAGLYCCYVVIIVLSVAVVALSVALSVKKTAQISTINTYAACPRNWIGVGNKCFYFNEIPSNWTLSQTLCKEQGAELARFDTEEELNFLRRYKGSSGYWFGLHRESSAHPWKWTDNTEYNNSVSIGGDEKHGFLSDNGFSSGRGYIVRKSICRKPNSYTSQCL</sequence>
<gene>
    <name type="primary">Ocil</name>
    <name type="synonym">Clec2d5</name>
</gene>
<feature type="chain" id="PRO_0000315294" description="C-type lectin domain family 2 member D5">
    <location>
        <begin position="1"/>
        <end position="233"/>
    </location>
</feature>
<feature type="topological domain" description="Cytoplasmic" evidence="2">
    <location>
        <begin position="1"/>
        <end position="76"/>
    </location>
</feature>
<feature type="transmembrane region" description="Helical; Signal-anchor for type II membrane protein" evidence="2">
    <location>
        <begin position="77"/>
        <end position="97"/>
    </location>
</feature>
<feature type="topological domain" description="Extracellular" evidence="2">
    <location>
        <begin position="98"/>
        <end position="233"/>
    </location>
</feature>
<feature type="domain" description="C-type lectin" evidence="3">
    <location>
        <begin position="119"/>
        <end position="228"/>
    </location>
</feature>
<feature type="region of interest" description="Disordered" evidence="4">
    <location>
        <begin position="1"/>
        <end position="52"/>
    </location>
</feature>
<feature type="compositionally biased region" description="Polar residues" evidence="4">
    <location>
        <begin position="16"/>
        <end position="29"/>
    </location>
</feature>
<feature type="compositionally biased region" description="Low complexity" evidence="4">
    <location>
        <begin position="30"/>
        <end position="50"/>
    </location>
</feature>
<feature type="glycosylation site" description="N-linked (GlcNAc...) asparagine" evidence="2">
    <location>
        <position position="132"/>
    </location>
</feature>